<gene>
    <name type="primary">MMP1</name>
</gene>
<accession>P21692</accession>
<sequence length="469" mass="53666">MFSLLLLLLLLCNTGSHGFPAATSETQEQDVEIVQKYLKNYYNLNSDGVPVEKKRNSGLVVEKLKQMQQFFGLKVTGKPDAETLNVMKQPRCGVPDVAEFVLTPGNPRWENTHLTYRIENYTPDLSREDVDRAIEKAFQLWSNVSPLTFTKVSEGQADIMISFVRGDHRDNSPFDGPGGNLAHAFQPGPGIGGDAHFDEDERWTKNFRDYNLYRVAAHELGHSLGLSHSTDIGALMYPNYIYTGDVQLSQDDIDGIQAIYGPSENPVQPSGPQTPQVCDSKLTFDAITTLRGELMFFKDRFYMRTNSFYPEVELNFISVFWPQVPNGLQAAYEIADRDEVRFFKGNKYWAVRGQDVLYGYPKDIHRSFGFPSTVKNIDAAVFEEDTGKTYFFVAHECWRYDEYKQSMDTGYPKMIAEEFPGIGNKVDAVFQKDGFLYFFHGTRQYQFDFKTKRILTLQKANSWFNCRKN</sequence>
<dbReference type="EC" id="3.4.24.7"/>
<dbReference type="EMBL" id="X54724">
    <property type="protein sequence ID" value="CAA38526.1"/>
    <property type="molecule type" value="mRNA"/>
</dbReference>
<dbReference type="PIR" id="S15986">
    <property type="entry name" value="KCPGI"/>
</dbReference>
<dbReference type="RefSeq" id="NP_001159701.1">
    <property type="nucleotide sequence ID" value="NM_001166229.1"/>
</dbReference>
<dbReference type="PDB" id="1FBL">
    <property type="method" value="X-ray"/>
    <property type="resolution" value="2.50 A"/>
    <property type="chains" value="A=100-469"/>
</dbReference>
<dbReference type="PDBsum" id="1FBL"/>
<dbReference type="SMR" id="P21692"/>
<dbReference type="FunCoup" id="P21692">
    <property type="interactions" value="255"/>
</dbReference>
<dbReference type="MEROPS" id="M10.001"/>
<dbReference type="GlyCosmos" id="P21692">
    <property type="glycosylation" value="1 site, No reported glycans"/>
</dbReference>
<dbReference type="GlyGen" id="P21692">
    <property type="glycosylation" value="1 site"/>
</dbReference>
<dbReference type="PaxDb" id="9823-ENSSSCP00000015909"/>
<dbReference type="PeptideAtlas" id="P21692"/>
<dbReference type="Ensembl" id="ENSSSCT00000038101.2">
    <property type="protein sequence ID" value="ENSSSCP00000042817.1"/>
    <property type="gene ID" value="ENSSSCG00000014985.5"/>
</dbReference>
<dbReference type="Ensembl" id="ENSSSCT00015072195.1">
    <property type="protein sequence ID" value="ENSSSCP00015028953.1"/>
    <property type="gene ID" value="ENSSSCG00015053476.1"/>
</dbReference>
<dbReference type="Ensembl" id="ENSSSCT00025053433.1">
    <property type="protein sequence ID" value="ENSSSCP00025022756.1"/>
    <property type="gene ID" value="ENSSSCG00025039149.1"/>
</dbReference>
<dbReference type="Ensembl" id="ENSSSCT00035102258.1">
    <property type="protein sequence ID" value="ENSSSCP00035043598.1"/>
    <property type="gene ID" value="ENSSSCG00035075081.1"/>
</dbReference>
<dbReference type="Ensembl" id="ENSSSCT00040074376.1">
    <property type="protein sequence ID" value="ENSSSCP00040031905.1"/>
    <property type="gene ID" value="ENSSSCG00040054640.1"/>
</dbReference>
<dbReference type="Ensembl" id="ENSSSCT00045061166.1">
    <property type="protein sequence ID" value="ENSSSCP00045042961.1"/>
    <property type="gene ID" value="ENSSSCG00045035329.1"/>
</dbReference>
<dbReference type="Ensembl" id="ENSSSCT00050062039.1">
    <property type="protein sequence ID" value="ENSSSCP00050026652.1"/>
    <property type="gene ID" value="ENSSSCG00050045565.1"/>
</dbReference>
<dbReference type="Ensembl" id="ENSSSCT00055015909.1">
    <property type="protein sequence ID" value="ENSSSCP00055012507.1"/>
    <property type="gene ID" value="ENSSSCG00055008073.1"/>
</dbReference>
<dbReference type="Ensembl" id="ENSSSCT00065007693.1">
    <property type="protein sequence ID" value="ENSSSCP00065003271.1"/>
    <property type="gene ID" value="ENSSSCG00065005685.1"/>
</dbReference>
<dbReference type="Ensembl" id="ENSSSCT00070021418.1">
    <property type="protein sequence ID" value="ENSSSCP00070017709.1"/>
    <property type="gene ID" value="ENSSSCG00070010991.1"/>
</dbReference>
<dbReference type="Ensembl" id="ENSSSCT00090008035">
    <property type="protein sequence ID" value="ENSSSCP00090004827"/>
    <property type="gene ID" value="ENSSSCG00090004593"/>
</dbReference>
<dbReference type="Ensembl" id="ENSSSCT00105014451">
    <property type="protein sequence ID" value="ENSSSCP00105010503"/>
    <property type="gene ID" value="ENSSSCG00105007178"/>
</dbReference>
<dbReference type="Ensembl" id="ENSSSCT00110025826">
    <property type="protein sequence ID" value="ENSSSCP00110017263"/>
    <property type="gene ID" value="ENSSSCG00110013557"/>
</dbReference>
<dbReference type="Ensembl" id="ENSSSCT00115011612">
    <property type="protein sequence ID" value="ENSSSCP00115010965"/>
    <property type="gene ID" value="ENSSSCG00115006701"/>
</dbReference>
<dbReference type="Ensembl" id="ENSSSCT00130018143">
    <property type="protein sequence ID" value="ENSSSCP00130012229"/>
    <property type="gene ID" value="ENSSSCG00130009718"/>
</dbReference>
<dbReference type="GeneID" id="397320"/>
<dbReference type="KEGG" id="ssc:397320"/>
<dbReference type="CTD" id="4312"/>
<dbReference type="eggNOG" id="KOG1565">
    <property type="taxonomic scope" value="Eukaryota"/>
</dbReference>
<dbReference type="GeneTree" id="ENSGT00940000154907"/>
<dbReference type="HOGENOM" id="CLU_015489_6_0_1"/>
<dbReference type="InParanoid" id="P21692"/>
<dbReference type="OrthoDB" id="406838at2759"/>
<dbReference type="TreeFam" id="TF315428"/>
<dbReference type="Reactome" id="R-SSC-1442490">
    <property type="pathway name" value="Collagen degradation"/>
</dbReference>
<dbReference type="Reactome" id="R-SSC-1474228">
    <property type="pathway name" value="Degradation of the extracellular matrix"/>
</dbReference>
<dbReference type="Reactome" id="R-SSC-1592389">
    <property type="pathway name" value="Activation of Matrix Metalloproteinases"/>
</dbReference>
<dbReference type="Reactome" id="R-SSC-210991">
    <property type="pathway name" value="Basigin interactions"/>
</dbReference>
<dbReference type="EvolutionaryTrace" id="P21692"/>
<dbReference type="Proteomes" id="UP000008227">
    <property type="component" value="Chromosome 9"/>
</dbReference>
<dbReference type="Proteomes" id="UP000314985">
    <property type="component" value="Chromosome 9"/>
</dbReference>
<dbReference type="Proteomes" id="UP000694570">
    <property type="component" value="Unplaced"/>
</dbReference>
<dbReference type="Proteomes" id="UP000694571">
    <property type="component" value="Unplaced"/>
</dbReference>
<dbReference type="Proteomes" id="UP000694720">
    <property type="component" value="Unplaced"/>
</dbReference>
<dbReference type="Proteomes" id="UP000694722">
    <property type="component" value="Unplaced"/>
</dbReference>
<dbReference type="Proteomes" id="UP000694723">
    <property type="component" value="Unplaced"/>
</dbReference>
<dbReference type="Proteomes" id="UP000694724">
    <property type="component" value="Unplaced"/>
</dbReference>
<dbReference type="Proteomes" id="UP000694725">
    <property type="component" value="Unplaced"/>
</dbReference>
<dbReference type="Proteomes" id="UP000694726">
    <property type="component" value="Unplaced"/>
</dbReference>
<dbReference type="Proteomes" id="UP000694727">
    <property type="component" value="Unplaced"/>
</dbReference>
<dbReference type="Proteomes" id="UP000694728">
    <property type="component" value="Unplaced"/>
</dbReference>
<dbReference type="Bgee" id="ENSSSCG00000014985">
    <property type="expression patterns" value="Expressed in duodenum and 17 other cell types or tissues"/>
</dbReference>
<dbReference type="ExpressionAtlas" id="P21692">
    <property type="expression patterns" value="baseline and differential"/>
</dbReference>
<dbReference type="GO" id="GO:0031012">
    <property type="term" value="C:extracellular matrix"/>
    <property type="evidence" value="ECO:0007669"/>
    <property type="project" value="InterPro"/>
</dbReference>
<dbReference type="GO" id="GO:0005576">
    <property type="term" value="C:extracellular region"/>
    <property type="evidence" value="ECO:0007669"/>
    <property type="project" value="UniProtKB-KW"/>
</dbReference>
<dbReference type="GO" id="GO:0004222">
    <property type="term" value="F:metalloendopeptidase activity"/>
    <property type="evidence" value="ECO:0000318"/>
    <property type="project" value="GO_Central"/>
</dbReference>
<dbReference type="GO" id="GO:0008233">
    <property type="term" value="F:peptidase activity"/>
    <property type="evidence" value="ECO:0000250"/>
    <property type="project" value="UniProtKB"/>
</dbReference>
<dbReference type="GO" id="GO:0008270">
    <property type="term" value="F:zinc ion binding"/>
    <property type="evidence" value="ECO:0007669"/>
    <property type="project" value="InterPro"/>
</dbReference>
<dbReference type="GO" id="GO:0071492">
    <property type="term" value="P:cellular response to UV-A"/>
    <property type="evidence" value="ECO:0000250"/>
    <property type="project" value="UniProtKB"/>
</dbReference>
<dbReference type="GO" id="GO:0030574">
    <property type="term" value="P:collagen catabolic process"/>
    <property type="evidence" value="ECO:0000318"/>
    <property type="project" value="GO_Central"/>
</dbReference>
<dbReference type="GO" id="GO:0030198">
    <property type="term" value="P:extracellular matrix organization"/>
    <property type="evidence" value="ECO:0000318"/>
    <property type="project" value="GO_Central"/>
</dbReference>
<dbReference type="GO" id="GO:0031334">
    <property type="term" value="P:positive regulation of protein-containing complex assembly"/>
    <property type="evidence" value="ECO:0007669"/>
    <property type="project" value="Ensembl"/>
</dbReference>
<dbReference type="GO" id="GO:0006508">
    <property type="term" value="P:proteolysis"/>
    <property type="evidence" value="ECO:0007669"/>
    <property type="project" value="UniProtKB-KW"/>
</dbReference>
<dbReference type="CDD" id="cd00094">
    <property type="entry name" value="HX"/>
    <property type="match status" value="1"/>
</dbReference>
<dbReference type="CDD" id="cd04278">
    <property type="entry name" value="ZnMc_MMP"/>
    <property type="match status" value="1"/>
</dbReference>
<dbReference type="FunFam" id="3.40.390.10:FF:000007">
    <property type="entry name" value="Collagenase 3"/>
    <property type="match status" value="1"/>
</dbReference>
<dbReference type="FunFam" id="2.110.10.10:FF:000002">
    <property type="entry name" value="Matrix metallopeptidase 3"/>
    <property type="match status" value="1"/>
</dbReference>
<dbReference type="Gene3D" id="3.40.390.10">
    <property type="entry name" value="Collagenase (Catalytic Domain)"/>
    <property type="match status" value="1"/>
</dbReference>
<dbReference type="Gene3D" id="2.110.10.10">
    <property type="entry name" value="Hemopexin-like domain"/>
    <property type="match status" value="1"/>
</dbReference>
<dbReference type="InterPro" id="IPR000585">
    <property type="entry name" value="Hemopexin-like_dom"/>
</dbReference>
<dbReference type="InterPro" id="IPR036375">
    <property type="entry name" value="Hemopexin-like_dom_sf"/>
</dbReference>
<dbReference type="InterPro" id="IPR018487">
    <property type="entry name" value="Hemopexin-like_repeat"/>
</dbReference>
<dbReference type="InterPro" id="IPR018486">
    <property type="entry name" value="Hemopexin_CS"/>
</dbReference>
<dbReference type="InterPro" id="IPR033739">
    <property type="entry name" value="M10A_MMP"/>
</dbReference>
<dbReference type="InterPro" id="IPR024079">
    <property type="entry name" value="MetalloPept_cat_dom_sf"/>
</dbReference>
<dbReference type="InterPro" id="IPR001818">
    <property type="entry name" value="Pept_M10_metallopeptidase"/>
</dbReference>
<dbReference type="InterPro" id="IPR021190">
    <property type="entry name" value="Pept_M10A"/>
</dbReference>
<dbReference type="InterPro" id="IPR021158">
    <property type="entry name" value="Pept_M10A_Zn_BS"/>
</dbReference>
<dbReference type="InterPro" id="IPR006026">
    <property type="entry name" value="Peptidase_Metallo"/>
</dbReference>
<dbReference type="InterPro" id="IPR002477">
    <property type="entry name" value="Peptidoglycan-bd-like"/>
</dbReference>
<dbReference type="InterPro" id="IPR036365">
    <property type="entry name" value="PGBD-like_sf"/>
</dbReference>
<dbReference type="PANTHER" id="PTHR10201:SF151">
    <property type="entry name" value="INTERSTITIAL COLLAGENASE"/>
    <property type="match status" value="1"/>
</dbReference>
<dbReference type="PANTHER" id="PTHR10201">
    <property type="entry name" value="MATRIX METALLOPROTEINASE"/>
    <property type="match status" value="1"/>
</dbReference>
<dbReference type="Pfam" id="PF00045">
    <property type="entry name" value="Hemopexin"/>
    <property type="match status" value="4"/>
</dbReference>
<dbReference type="Pfam" id="PF00413">
    <property type="entry name" value="Peptidase_M10"/>
    <property type="match status" value="1"/>
</dbReference>
<dbReference type="Pfam" id="PF01471">
    <property type="entry name" value="PG_binding_1"/>
    <property type="match status" value="1"/>
</dbReference>
<dbReference type="PIRSF" id="PIRSF001191">
    <property type="entry name" value="Peptidase_M10A_matrix"/>
    <property type="match status" value="1"/>
</dbReference>
<dbReference type="PRINTS" id="PR00138">
    <property type="entry name" value="MATRIXIN"/>
</dbReference>
<dbReference type="SMART" id="SM00120">
    <property type="entry name" value="HX"/>
    <property type="match status" value="4"/>
</dbReference>
<dbReference type="SMART" id="SM00235">
    <property type="entry name" value="ZnMc"/>
    <property type="match status" value="1"/>
</dbReference>
<dbReference type="SUPFAM" id="SSF50923">
    <property type="entry name" value="Hemopexin-like domain"/>
    <property type="match status" value="1"/>
</dbReference>
<dbReference type="SUPFAM" id="SSF55486">
    <property type="entry name" value="Metalloproteases ('zincins'), catalytic domain"/>
    <property type="match status" value="1"/>
</dbReference>
<dbReference type="SUPFAM" id="SSF47090">
    <property type="entry name" value="PGBD-like"/>
    <property type="match status" value="1"/>
</dbReference>
<dbReference type="PROSITE" id="PS00546">
    <property type="entry name" value="CYSTEINE_SWITCH"/>
    <property type="match status" value="1"/>
</dbReference>
<dbReference type="PROSITE" id="PS00024">
    <property type="entry name" value="HEMOPEXIN"/>
    <property type="match status" value="1"/>
</dbReference>
<dbReference type="PROSITE" id="PS51642">
    <property type="entry name" value="HEMOPEXIN_2"/>
    <property type="match status" value="4"/>
</dbReference>
<dbReference type="PROSITE" id="PS00142">
    <property type="entry name" value="ZINC_PROTEASE"/>
    <property type="match status" value="1"/>
</dbReference>
<organism>
    <name type="scientific">Sus scrofa</name>
    <name type="common">Pig</name>
    <dbReference type="NCBI Taxonomy" id="9823"/>
    <lineage>
        <taxon>Eukaryota</taxon>
        <taxon>Metazoa</taxon>
        <taxon>Chordata</taxon>
        <taxon>Craniata</taxon>
        <taxon>Vertebrata</taxon>
        <taxon>Euteleostomi</taxon>
        <taxon>Mammalia</taxon>
        <taxon>Eutheria</taxon>
        <taxon>Laurasiatheria</taxon>
        <taxon>Artiodactyla</taxon>
        <taxon>Suina</taxon>
        <taxon>Suidae</taxon>
        <taxon>Sus</taxon>
    </lineage>
</organism>
<evidence type="ECO:0000250" key="1"/>
<evidence type="ECO:0000250" key="2">
    <source>
        <dbReference type="UniProtKB" id="P03956"/>
    </source>
</evidence>
<evidence type="ECO:0000255" key="3"/>
<evidence type="ECO:0000255" key="4">
    <source>
        <dbReference type="PROSITE-ProRule" id="PRU10095"/>
    </source>
</evidence>
<evidence type="ECO:0000269" key="5">
    <source>
    </source>
</evidence>
<evidence type="ECO:0000269" key="6">
    <source>
    </source>
</evidence>
<evidence type="ECO:0000305" key="7"/>
<evidence type="ECO:0007829" key="8">
    <source>
        <dbReference type="PDB" id="1FBL"/>
    </source>
</evidence>
<protein>
    <recommendedName>
        <fullName>Interstitial collagenase</fullName>
        <ecNumber>3.4.24.7</ecNumber>
    </recommendedName>
    <alternativeName>
        <fullName>Matrix metalloproteinase-1</fullName>
        <shortName>MMP-1</shortName>
    </alternativeName>
    <component>
        <recommendedName>
            <fullName>18 kDa interstitial collagenase</fullName>
        </recommendedName>
    </component>
</protein>
<proteinExistence type="evidence at protein level"/>
<reference key="1">
    <citation type="journal article" date="1991" name="Matrix">
        <title>Porcine collagenase from synovial fibroblasts: cDNA sequence and modulation of expression of RNA in vitro by various cytokines.</title>
        <authorList>
            <person name="Richards C.D."/>
            <person name="Rafferty J.A."/>
            <person name="Reynolds J.J."/>
            <person name="Saklatvala J."/>
        </authorList>
    </citation>
    <scope>NUCLEOTIDE SEQUENCE [MRNA]</scope>
    <scope>PARTIAL PROTEIN SEQUENCE</scope>
</reference>
<reference key="2">
    <citation type="journal article" date="1990" name="Nucleic Acids Res.">
        <title>Nucleotide sequence of a cDNA for porcine type I collagenase, obtained by PCR.</title>
        <authorList>
            <person name="Clarke N.J."/>
            <person name="O'Hare M.C."/>
            <person name="Cawston T.E."/>
            <person name="Harper G.P."/>
        </authorList>
    </citation>
    <scope>NUCLEOTIDE SEQUENCE [MRNA] OF 25-469</scope>
    <source>
        <tissue>Synovial cell</tissue>
    </source>
</reference>
<reference key="3">
    <citation type="journal article" date="1995" name="Structure">
        <title>Structure of full-length porcine synovial collagenase reveals a C-terminal domain containing a calcium-linked, four-bladed beta-propeller.</title>
        <authorList>
            <person name="Li J."/>
            <person name="Brick P."/>
            <person name="O'Hare M.C."/>
            <person name="Skarzynski T."/>
            <person name="Lloyd L.F."/>
            <person name="Curry V.A."/>
            <person name="Clark I.M."/>
            <person name="Bigg H.F."/>
            <person name="Hazleman B.L."/>
            <person name="Cawston T.E."/>
            <person name="Blow D.M."/>
        </authorList>
    </citation>
    <scope>X-RAY CRYSTALLOGRAPHY (2.5 ANGSTROMS) OF 100-469</scope>
</reference>
<reference key="4">
    <citation type="journal article" date="1995" name="Arch. Biochem. Biophys.">
        <title>Recombinant porcine collagenase: purification and autolysis.</title>
        <authorList>
            <person name="Clark I.M."/>
            <person name="Mitchell R.E."/>
            <person name="Powell L.K."/>
            <person name="Bigg H.F."/>
            <person name="Cawston T.E."/>
            <person name="O'Hare M.C."/>
        </authorList>
    </citation>
    <scope>PROTEIN SEQUENCE OF 100-104 AND 248-282</scope>
    <scope>AUTOCATALYTIC CLEAVAGE SITE</scope>
</reference>
<comment type="function">
    <text>Cleaves collagens of types I, II, and III at one site in the helical domain. Also cleaves collagens of types VII and X.</text>
</comment>
<comment type="catalytic activity">
    <reaction>
        <text>Cleavage of the triple helix of collagen at about three-quarters of the length of the molecule from the N-terminus, at 775-Gly-|-Ile-776 in the alpha1(I) chain. Cleaves synthetic substrates and alpha-macroglobulins at bonds where P1' is a hydrophobic residue.</text>
        <dbReference type="EC" id="3.4.24.7"/>
    </reaction>
</comment>
<comment type="cofactor">
    <cofactor>
        <name>Ca(2+)</name>
        <dbReference type="ChEBI" id="CHEBI:29108"/>
    </cofactor>
    <text>Binds 4 Ca(2+) ions per subunit.</text>
</comment>
<comment type="cofactor">
    <cofactor>
        <name>Zn(2+)</name>
        <dbReference type="ChEBI" id="CHEBI:29105"/>
    </cofactor>
    <text>Binds 2 Zn(2+) ions per subunit.</text>
</comment>
<comment type="activity regulation">
    <text>Can be activated without removal of the activation peptide.</text>
</comment>
<comment type="subcellular location">
    <subcellularLocation>
        <location evidence="1">Secreted</location>
        <location evidence="1">Extracellular space</location>
        <location evidence="1">Extracellular matrix</location>
    </subcellularLocation>
</comment>
<comment type="domain">
    <text>The conserved cysteine present in the cysteine-switch motif binds the catalytic zinc ion, thus inhibiting the enzyme. The dissociation of the cysteine from the zinc ion upon the activation-peptide release activates the enzyme.</text>
</comment>
<comment type="PTM">
    <text>Undergoes autolytic cleavage to produce a N-terminal fragment having reduced collagenolytic activity.</text>
</comment>
<comment type="PTM">
    <text evidence="2">Tyrosine phosphorylated in platelets by PKDCC/VLK.</text>
</comment>
<comment type="similarity">
    <text evidence="7">Belongs to the peptidase M10A family.</text>
</comment>
<feature type="signal peptide">
    <location>
        <begin position="1"/>
        <end position="19"/>
    </location>
</feature>
<feature type="propeptide" id="PRO_0000028707" description="Activation peptide" evidence="5">
    <location>
        <begin position="20"/>
        <end position="99"/>
    </location>
</feature>
<feature type="chain" id="PRO_0000028708" description="Interstitial collagenase">
    <location>
        <begin position="100"/>
        <end position="469"/>
    </location>
</feature>
<feature type="chain" id="PRO_0000028709" description="18 kDa interstitial collagenase">
    <location>
        <begin position="100"/>
        <end position="258"/>
    </location>
</feature>
<feature type="repeat" description="Hemopexin 1">
    <location>
        <begin position="275"/>
        <end position="324"/>
    </location>
</feature>
<feature type="repeat" description="Hemopexin 2">
    <location>
        <begin position="325"/>
        <end position="371"/>
    </location>
</feature>
<feature type="repeat" description="Hemopexin 3">
    <location>
        <begin position="374"/>
        <end position="422"/>
    </location>
</feature>
<feature type="repeat" description="Hemopexin 4">
    <location>
        <begin position="423"/>
        <end position="466"/>
    </location>
</feature>
<feature type="short sequence motif" description="Cysteine switch" evidence="1">
    <location>
        <begin position="90"/>
        <end position="97"/>
    </location>
</feature>
<feature type="active site" evidence="4 6">
    <location>
        <position position="219"/>
    </location>
</feature>
<feature type="binding site" description="in inhibited form" evidence="1">
    <location>
        <position position="92"/>
    </location>
    <ligand>
        <name>Zn(2+)</name>
        <dbReference type="ChEBI" id="CHEBI:29105"/>
        <label>2</label>
        <note>catalytic</note>
    </ligand>
</feature>
<feature type="binding site">
    <location>
        <position position="124"/>
    </location>
    <ligand>
        <name>Ca(2+)</name>
        <dbReference type="ChEBI" id="CHEBI:29108"/>
        <label>1</label>
    </ligand>
</feature>
<feature type="binding site">
    <location>
        <position position="158"/>
    </location>
    <ligand>
        <name>Ca(2+)</name>
        <dbReference type="ChEBI" id="CHEBI:29108"/>
        <label>2</label>
    </ligand>
</feature>
<feature type="binding site">
    <location>
        <position position="168"/>
    </location>
    <ligand>
        <name>Zn(2+)</name>
        <dbReference type="ChEBI" id="CHEBI:29105"/>
        <label>1</label>
    </ligand>
</feature>
<feature type="binding site">
    <location>
        <position position="170"/>
    </location>
    <ligand>
        <name>Zn(2+)</name>
        <dbReference type="ChEBI" id="CHEBI:29105"/>
        <label>1</label>
    </ligand>
</feature>
<feature type="binding site">
    <location>
        <position position="175"/>
    </location>
    <ligand>
        <name>Ca(2+)</name>
        <dbReference type="ChEBI" id="CHEBI:29108"/>
        <label>3</label>
    </ligand>
</feature>
<feature type="binding site">
    <location>
        <position position="176"/>
    </location>
    <ligand>
        <name>Ca(2+)</name>
        <dbReference type="ChEBI" id="CHEBI:29108"/>
        <label>3</label>
    </ligand>
</feature>
<feature type="binding site">
    <location>
        <position position="178"/>
    </location>
    <ligand>
        <name>Ca(2+)</name>
        <dbReference type="ChEBI" id="CHEBI:29108"/>
        <label>3</label>
    </ligand>
</feature>
<feature type="binding site">
    <location>
        <position position="180"/>
    </location>
    <ligand>
        <name>Ca(2+)</name>
        <dbReference type="ChEBI" id="CHEBI:29108"/>
        <label>3</label>
    </ligand>
</feature>
<feature type="binding site">
    <location>
        <position position="183"/>
    </location>
    <ligand>
        <name>Zn(2+)</name>
        <dbReference type="ChEBI" id="CHEBI:29105"/>
        <label>1</label>
    </ligand>
</feature>
<feature type="binding site">
    <location>
        <position position="190"/>
    </location>
    <ligand>
        <name>Ca(2+)</name>
        <dbReference type="ChEBI" id="CHEBI:29108"/>
        <label>2</label>
    </ligand>
</feature>
<feature type="binding site">
    <location>
        <position position="192"/>
    </location>
    <ligand>
        <name>Ca(2+)</name>
        <dbReference type="ChEBI" id="CHEBI:29108"/>
        <label>2</label>
    </ligand>
</feature>
<feature type="binding site">
    <location>
        <position position="194"/>
    </location>
    <ligand>
        <name>Ca(2+)</name>
        <dbReference type="ChEBI" id="CHEBI:29108"/>
        <label>2</label>
    </ligand>
</feature>
<feature type="binding site">
    <location>
        <position position="196"/>
    </location>
    <ligand>
        <name>Zn(2+)</name>
        <dbReference type="ChEBI" id="CHEBI:29105"/>
        <label>1</label>
    </ligand>
</feature>
<feature type="binding site">
    <location>
        <position position="198"/>
    </location>
    <ligand>
        <name>Ca(2+)</name>
        <dbReference type="ChEBI" id="CHEBI:29108"/>
        <label>3</label>
    </ligand>
</feature>
<feature type="binding site">
    <location>
        <position position="199"/>
    </location>
    <ligand>
        <name>Ca(2+)</name>
        <dbReference type="ChEBI" id="CHEBI:29108"/>
        <label>1</label>
    </ligand>
</feature>
<feature type="binding site">
    <location>
        <position position="201"/>
    </location>
    <ligand>
        <name>Ca(2+)</name>
        <dbReference type="ChEBI" id="CHEBI:29108"/>
        <label>3</label>
    </ligand>
</feature>
<feature type="binding site">
    <location>
        <position position="218"/>
    </location>
    <ligand>
        <name>Zn(2+)</name>
        <dbReference type="ChEBI" id="CHEBI:29105"/>
        <label>2</label>
        <note>catalytic</note>
    </ligand>
</feature>
<feature type="binding site">
    <location>
        <position position="222"/>
    </location>
    <ligand>
        <name>Zn(2+)</name>
        <dbReference type="ChEBI" id="CHEBI:29105"/>
        <label>2</label>
        <note>catalytic</note>
    </ligand>
</feature>
<feature type="binding site">
    <location>
        <position position="228"/>
    </location>
    <ligand>
        <name>Zn(2+)</name>
        <dbReference type="ChEBI" id="CHEBI:29105"/>
        <label>2</label>
        <note>catalytic</note>
    </ligand>
</feature>
<feature type="binding site">
    <location>
        <position position="285"/>
    </location>
    <ligand>
        <name>Ca(2+)</name>
        <dbReference type="ChEBI" id="CHEBI:29108"/>
        <label>4</label>
    </ligand>
</feature>
<feature type="binding site">
    <location>
        <position position="329"/>
    </location>
    <ligand>
        <name>Ca(2+)</name>
        <dbReference type="ChEBI" id="CHEBI:29108"/>
        <label>4</label>
    </ligand>
</feature>
<feature type="binding site">
    <location>
        <position position="378"/>
    </location>
    <ligand>
        <name>Ca(2+)</name>
        <dbReference type="ChEBI" id="CHEBI:29108"/>
        <label>4</label>
    </ligand>
</feature>
<feature type="binding site">
    <location>
        <position position="427"/>
    </location>
    <ligand>
        <name>Ca(2+)</name>
        <dbReference type="ChEBI" id="CHEBI:29108"/>
        <label>4</label>
    </ligand>
</feature>
<feature type="site" description="Cleavage; by autolysis">
    <location>
        <begin position="258"/>
        <end position="259"/>
    </location>
</feature>
<feature type="modified residue" description="Phosphoserine" evidence="2">
    <location>
        <position position="57"/>
    </location>
</feature>
<feature type="modified residue" description="Phosphothreonine" evidence="2">
    <location>
        <position position="274"/>
    </location>
</feature>
<feature type="modified residue" description="Phosphotyrosine; by PKDCC" evidence="2">
    <location>
        <position position="360"/>
    </location>
</feature>
<feature type="glycosylation site" description="N-linked (GlcNAc...) asparagine" evidence="3">
    <location>
        <position position="120"/>
    </location>
</feature>
<feature type="disulfide bond">
    <location>
        <begin position="278"/>
        <end position="466"/>
    </location>
</feature>
<feature type="strand" evidence="8">
    <location>
        <begin position="110"/>
        <end position="118"/>
    </location>
</feature>
<feature type="helix" evidence="8">
    <location>
        <begin position="127"/>
        <end position="142"/>
    </location>
</feature>
<feature type="strand" evidence="8">
    <location>
        <begin position="148"/>
        <end position="155"/>
    </location>
</feature>
<feature type="strand" evidence="8">
    <location>
        <begin position="158"/>
        <end position="164"/>
    </location>
</feature>
<feature type="strand" evidence="8">
    <location>
        <begin position="169"/>
        <end position="171"/>
    </location>
</feature>
<feature type="strand" evidence="8">
    <location>
        <begin position="176"/>
        <end position="179"/>
    </location>
</feature>
<feature type="strand" evidence="8">
    <location>
        <begin position="182"/>
        <end position="184"/>
    </location>
</feature>
<feature type="turn" evidence="8">
    <location>
        <begin position="190"/>
        <end position="193"/>
    </location>
</feature>
<feature type="strand" evidence="8">
    <location>
        <begin position="195"/>
        <end position="198"/>
    </location>
</feature>
<feature type="strand" evidence="8">
    <location>
        <begin position="204"/>
        <end position="209"/>
    </location>
</feature>
<feature type="helix" evidence="8">
    <location>
        <begin position="212"/>
        <end position="223"/>
    </location>
</feature>
<feature type="strand" evidence="8">
    <location>
        <begin position="237"/>
        <end position="239"/>
    </location>
</feature>
<feature type="helix" evidence="8">
    <location>
        <begin position="250"/>
        <end position="260"/>
    </location>
</feature>
<feature type="strand" evidence="8">
    <location>
        <begin position="264"/>
        <end position="267"/>
    </location>
</feature>
<feature type="strand" evidence="8">
    <location>
        <begin position="285"/>
        <end position="290"/>
    </location>
</feature>
<feature type="strand" evidence="8">
    <location>
        <begin position="293"/>
        <end position="298"/>
    </location>
</feature>
<feature type="strand" evidence="8">
    <location>
        <begin position="301"/>
        <end position="305"/>
    </location>
</feature>
<feature type="strand" evidence="8">
    <location>
        <begin position="313"/>
        <end position="316"/>
    </location>
</feature>
<feature type="helix" evidence="8">
    <location>
        <begin position="317"/>
        <end position="320"/>
    </location>
</feature>
<feature type="strand" evidence="8">
    <location>
        <begin position="329"/>
        <end position="334"/>
    </location>
</feature>
<feature type="turn" evidence="8">
    <location>
        <begin position="335"/>
        <end position="338"/>
    </location>
</feature>
<feature type="strand" evidence="8">
    <location>
        <begin position="339"/>
        <end position="344"/>
    </location>
</feature>
<feature type="strand" evidence="8">
    <location>
        <begin position="347"/>
        <end position="352"/>
    </location>
</feature>
<feature type="helix" evidence="8">
    <location>
        <begin position="364"/>
        <end position="368"/>
    </location>
</feature>
<feature type="strand" evidence="8">
    <location>
        <begin position="379"/>
        <end position="383"/>
    </location>
</feature>
<feature type="turn" evidence="8">
    <location>
        <begin position="384"/>
        <end position="387"/>
    </location>
</feature>
<feature type="strand" evidence="8">
    <location>
        <begin position="388"/>
        <end position="393"/>
    </location>
</feature>
<feature type="strand" evidence="8">
    <location>
        <begin position="396"/>
        <end position="401"/>
    </location>
</feature>
<feature type="turn" evidence="8">
    <location>
        <begin position="402"/>
        <end position="404"/>
    </location>
</feature>
<feature type="helix" evidence="8">
    <location>
        <begin position="415"/>
        <end position="418"/>
    </location>
</feature>
<feature type="strand" evidence="8">
    <location>
        <begin position="427"/>
        <end position="432"/>
    </location>
</feature>
<feature type="strand" evidence="8">
    <location>
        <begin position="435"/>
        <end position="440"/>
    </location>
</feature>
<feature type="strand" evidence="8">
    <location>
        <begin position="443"/>
        <end position="448"/>
    </location>
</feature>
<feature type="turn" evidence="8">
    <location>
        <begin position="449"/>
        <end position="452"/>
    </location>
</feature>
<feature type="strand" evidence="8">
    <location>
        <begin position="453"/>
        <end position="459"/>
    </location>
</feature>
<feature type="helix" evidence="8">
    <location>
        <begin position="462"/>
        <end position="464"/>
    </location>
</feature>
<name>MMP1_PIG</name>
<keyword id="KW-0002">3D-structure</keyword>
<keyword id="KW-0068">Autocatalytic cleavage</keyword>
<keyword id="KW-0106">Calcium</keyword>
<keyword id="KW-0177">Collagen degradation</keyword>
<keyword id="KW-0903">Direct protein sequencing</keyword>
<keyword id="KW-1015">Disulfide bond</keyword>
<keyword id="KW-0272">Extracellular matrix</keyword>
<keyword id="KW-0325">Glycoprotein</keyword>
<keyword id="KW-0378">Hydrolase</keyword>
<keyword id="KW-0479">Metal-binding</keyword>
<keyword id="KW-0482">Metalloprotease</keyword>
<keyword id="KW-0597">Phosphoprotein</keyword>
<keyword id="KW-0645">Protease</keyword>
<keyword id="KW-1185">Reference proteome</keyword>
<keyword id="KW-0677">Repeat</keyword>
<keyword id="KW-0964">Secreted</keyword>
<keyword id="KW-0732">Signal</keyword>
<keyword id="KW-0862">Zinc</keyword>
<keyword id="KW-0865">Zymogen</keyword>